<reference key="1">
    <citation type="submission" date="2006-08" db="EMBL/GenBank/DDBJ databases">
        <title>Complete sequence of chromosome 2 of Burkholderia cepacia AMMD.</title>
        <authorList>
            <person name="Copeland A."/>
            <person name="Lucas S."/>
            <person name="Lapidus A."/>
            <person name="Barry K."/>
            <person name="Detter J.C."/>
            <person name="Glavina del Rio T."/>
            <person name="Hammon N."/>
            <person name="Israni S."/>
            <person name="Pitluck S."/>
            <person name="Bruce D."/>
            <person name="Chain P."/>
            <person name="Malfatti S."/>
            <person name="Shin M."/>
            <person name="Vergez L."/>
            <person name="Schmutz J."/>
            <person name="Larimer F."/>
            <person name="Land M."/>
            <person name="Hauser L."/>
            <person name="Kyrpides N."/>
            <person name="Kim E."/>
            <person name="Parke J."/>
            <person name="Coenye T."/>
            <person name="Konstantinidis K."/>
            <person name="Ramette A."/>
            <person name="Tiedje J."/>
            <person name="Richardson P."/>
        </authorList>
    </citation>
    <scope>NUCLEOTIDE SEQUENCE [LARGE SCALE GENOMIC DNA]</scope>
    <source>
        <strain>ATCC BAA-244 / DSM 16087 / CCUG 44356 / LMG 19182 / AMMD</strain>
    </source>
</reference>
<gene>
    <name evidence="1" type="primary">dxs</name>
    <name type="ordered locus">Bamb_3250</name>
</gene>
<sequence length="646" mass="70018">MRARLISYNGTTMYDLLKTIDDPADLRRLDRRQLQPLADELRAFVLDSVSKTGGHLSSNLGTVELTIALHYVFNTPNDRIVWDVGHQTYPHKILTGRRDQMHSLRQYDGISGFPRRSESEYDTFGTAHSSTSISAALGMAIGSQLNGDDRFSIAVIGDGAMTAGMAFEAMNNAGVSEDAKLLVILNDNDMSISPPVGALNRHLARLMSGRFYAAARAGVERVLSVAPPVLELARKLEEHAKGMVVPATLFEEFGFNYIGPIDGHDLDSLIPTLQNIRELRGPQFLHVVTKKGQGYKLAEADPVLYHGPGKFNPAEGIKPSPTPAKKTYTQVFGEWLCDEAERDSRVVGITPAMREGSGMVEFEKRFKDRYYDVGIAEQHAVTFAGGLATEGLKPVVAIYSTFLQRAYDQLIHDVALQNLPVVFAIDRAGLVGADGATHAGAYDLAFMRCIPNMTIMAASDENECRQMLHTALQQPNPTAVRYPRGAGTGVATVKEFTEIPLGKGEVRRRTSQPEGKRVAILAFGTMVAPSLAAGEELDATVANMRFVKPIDAALVRELAETHDYLVTVEEGCVMGGAGSACVEALMESGVIRPVIQLGLPDQFIDHGDPAKLLAQCGLDGAGIAKSIRERFLSPAADVADQAKRVA</sequence>
<evidence type="ECO:0000255" key="1">
    <source>
        <dbReference type="HAMAP-Rule" id="MF_00315"/>
    </source>
</evidence>
<keyword id="KW-0414">Isoprene biosynthesis</keyword>
<keyword id="KW-0460">Magnesium</keyword>
<keyword id="KW-0479">Metal-binding</keyword>
<keyword id="KW-0784">Thiamine biosynthesis</keyword>
<keyword id="KW-0786">Thiamine pyrophosphate</keyword>
<keyword id="KW-0808">Transferase</keyword>
<comment type="function">
    <text evidence="1">Catalyzes the acyloin condensation reaction between C atoms 2 and 3 of pyruvate and glyceraldehyde 3-phosphate to yield 1-deoxy-D-xylulose-5-phosphate (DXP).</text>
</comment>
<comment type="catalytic activity">
    <reaction evidence="1">
        <text>D-glyceraldehyde 3-phosphate + pyruvate + H(+) = 1-deoxy-D-xylulose 5-phosphate + CO2</text>
        <dbReference type="Rhea" id="RHEA:12605"/>
        <dbReference type="ChEBI" id="CHEBI:15361"/>
        <dbReference type="ChEBI" id="CHEBI:15378"/>
        <dbReference type="ChEBI" id="CHEBI:16526"/>
        <dbReference type="ChEBI" id="CHEBI:57792"/>
        <dbReference type="ChEBI" id="CHEBI:59776"/>
        <dbReference type="EC" id="2.2.1.7"/>
    </reaction>
</comment>
<comment type="cofactor">
    <cofactor evidence="1">
        <name>Mg(2+)</name>
        <dbReference type="ChEBI" id="CHEBI:18420"/>
    </cofactor>
    <text evidence="1">Binds 1 Mg(2+) ion per subunit.</text>
</comment>
<comment type="cofactor">
    <cofactor evidence="1">
        <name>thiamine diphosphate</name>
        <dbReference type="ChEBI" id="CHEBI:58937"/>
    </cofactor>
    <text evidence="1">Binds 1 thiamine pyrophosphate per subunit.</text>
</comment>
<comment type="pathway">
    <text evidence="1">Metabolic intermediate biosynthesis; 1-deoxy-D-xylulose 5-phosphate biosynthesis; 1-deoxy-D-xylulose 5-phosphate from D-glyceraldehyde 3-phosphate and pyruvate: step 1/1.</text>
</comment>
<comment type="subunit">
    <text evidence="1">Homodimer.</text>
</comment>
<comment type="similarity">
    <text evidence="1">Belongs to the transketolase family. DXPS subfamily.</text>
</comment>
<protein>
    <recommendedName>
        <fullName evidence="1">1-deoxy-D-xylulose-5-phosphate synthase</fullName>
        <ecNumber evidence="1">2.2.1.7</ecNumber>
    </recommendedName>
    <alternativeName>
        <fullName evidence="1">1-deoxyxylulose-5-phosphate synthase</fullName>
        <shortName evidence="1">DXP synthase</shortName>
        <shortName evidence="1">DXPS</shortName>
    </alternativeName>
</protein>
<proteinExistence type="inferred from homology"/>
<organism>
    <name type="scientific">Burkholderia ambifaria (strain ATCC BAA-244 / DSM 16087 / CCUG 44356 / LMG 19182 / AMMD)</name>
    <name type="common">Burkholderia cepacia (strain AMMD)</name>
    <dbReference type="NCBI Taxonomy" id="339670"/>
    <lineage>
        <taxon>Bacteria</taxon>
        <taxon>Pseudomonadati</taxon>
        <taxon>Pseudomonadota</taxon>
        <taxon>Betaproteobacteria</taxon>
        <taxon>Burkholderiales</taxon>
        <taxon>Burkholderiaceae</taxon>
        <taxon>Burkholderia</taxon>
        <taxon>Burkholderia cepacia complex</taxon>
    </lineage>
</organism>
<dbReference type="EC" id="2.2.1.7" evidence="1"/>
<dbReference type="EMBL" id="CP000441">
    <property type="protein sequence ID" value="ABI88805.1"/>
    <property type="molecule type" value="Genomic_DNA"/>
</dbReference>
<dbReference type="SMR" id="Q0BAL8"/>
<dbReference type="KEGG" id="bam:Bamb_3250"/>
<dbReference type="eggNOG" id="COG1154">
    <property type="taxonomic scope" value="Bacteria"/>
</dbReference>
<dbReference type="UniPathway" id="UPA00064">
    <property type="reaction ID" value="UER00091"/>
</dbReference>
<dbReference type="Proteomes" id="UP000000662">
    <property type="component" value="Chromosome 2"/>
</dbReference>
<dbReference type="GO" id="GO:0005829">
    <property type="term" value="C:cytosol"/>
    <property type="evidence" value="ECO:0007669"/>
    <property type="project" value="TreeGrafter"/>
</dbReference>
<dbReference type="GO" id="GO:0008661">
    <property type="term" value="F:1-deoxy-D-xylulose-5-phosphate synthase activity"/>
    <property type="evidence" value="ECO:0007669"/>
    <property type="project" value="UniProtKB-UniRule"/>
</dbReference>
<dbReference type="GO" id="GO:0000287">
    <property type="term" value="F:magnesium ion binding"/>
    <property type="evidence" value="ECO:0007669"/>
    <property type="project" value="UniProtKB-UniRule"/>
</dbReference>
<dbReference type="GO" id="GO:0030976">
    <property type="term" value="F:thiamine pyrophosphate binding"/>
    <property type="evidence" value="ECO:0007669"/>
    <property type="project" value="UniProtKB-UniRule"/>
</dbReference>
<dbReference type="GO" id="GO:0052865">
    <property type="term" value="P:1-deoxy-D-xylulose 5-phosphate biosynthetic process"/>
    <property type="evidence" value="ECO:0007669"/>
    <property type="project" value="UniProtKB-UniPathway"/>
</dbReference>
<dbReference type="GO" id="GO:0019288">
    <property type="term" value="P:isopentenyl diphosphate biosynthetic process, methylerythritol 4-phosphate pathway"/>
    <property type="evidence" value="ECO:0007669"/>
    <property type="project" value="TreeGrafter"/>
</dbReference>
<dbReference type="GO" id="GO:0016114">
    <property type="term" value="P:terpenoid biosynthetic process"/>
    <property type="evidence" value="ECO:0007669"/>
    <property type="project" value="UniProtKB-UniRule"/>
</dbReference>
<dbReference type="GO" id="GO:0009228">
    <property type="term" value="P:thiamine biosynthetic process"/>
    <property type="evidence" value="ECO:0007669"/>
    <property type="project" value="UniProtKB-UniRule"/>
</dbReference>
<dbReference type="CDD" id="cd02007">
    <property type="entry name" value="TPP_DXS"/>
    <property type="match status" value="1"/>
</dbReference>
<dbReference type="CDD" id="cd07033">
    <property type="entry name" value="TPP_PYR_DXS_TK_like"/>
    <property type="match status" value="1"/>
</dbReference>
<dbReference type="FunFam" id="3.40.50.920:FF:000002">
    <property type="entry name" value="1-deoxy-D-xylulose-5-phosphate synthase"/>
    <property type="match status" value="1"/>
</dbReference>
<dbReference type="FunFam" id="3.40.50.970:FF:000005">
    <property type="entry name" value="1-deoxy-D-xylulose-5-phosphate synthase"/>
    <property type="match status" value="1"/>
</dbReference>
<dbReference type="Gene3D" id="3.40.50.920">
    <property type="match status" value="1"/>
</dbReference>
<dbReference type="Gene3D" id="3.40.50.970">
    <property type="match status" value="2"/>
</dbReference>
<dbReference type="HAMAP" id="MF_00315">
    <property type="entry name" value="DXP_synth"/>
    <property type="match status" value="1"/>
</dbReference>
<dbReference type="InterPro" id="IPR005477">
    <property type="entry name" value="Dxylulose-5-P_synthase"/>
</dbReference>
<dbReference type="InterPro" id="IPR029061">
    <property type="entry name" value="THDP-binding"/>
</dbReference>
<dbReference type="InterPro" id="IPR009014">
    <property type="entry name" value="Transketo_C/PFOR_II"/>
</dbReference>
<dbReference type="InterPro" id="IPR005475">
    <property type="entry name" value="Transketolase-like_Pyr-bd"/>
</dbReference>
<dbReference type="InterPro" id="IPR020826">
    <property type="entry name" value="Transketolase_BS"/>
</dbReference>
<dbReference type="InterPro" id="IPR033248">
    <property type="entry name" value="Transketolase_C"/>
</dbReference>
<dbReference type="InterPro" id="IPR049557">
    <property type="entry name" value="Transketolase_CS"/>
</dbReference>
<dbReference type="NCBIfam" id="TIGR00204">
    <property type="entry name" value="dxs"/>
    <property type="match status" value="1"/>
</dbReference>
<dbReference type="NCBIfam" id="NF003933">
    <property type="entry name" value="PRK05444.2-2"/>
    <property type="match status" value="1"/>
</dbReference>
<dbReference type="PANTHER" id="PTHR43322">
    <property type="entry name" value="1-D-DEOXYXYLULOSE 5-PHOSPHATE SYNTHASE-RELATED"/>
    <property type="match status" value="1"/>
</dbReference>
<dbReference type="PANTHER" id="PTHR43322:SF5">
    <property type="entry name" value="1-DEOXY-D-XYLULOSE-5-PHOSPHATE SYNTHASE, CHLOROPLASTIC"/>
    <property type="match status" value="1"/>
</dbReference>
<dbReference type="Pfam" id="PF13292">
    <property type="entry name" value="DXP_synthase_N"/>
    <property type="match status" value="1"/>
</dbReference>
<dbReference type="Pfam" id="PF02779">
    <property type="entry name" value="Transket_pyr"/>
    <property type="match status" value="1"/>
</dbReference>
<dbReference type="Pfam" id="PF02780">
    <property type="entry name" value="Transketolase_C"/>
    <property type="match status" value="1"/>
</dbReference>
<dbReference type="SMART" id="SM00861">
    <property type="entry name" value="Transket_pyr"/>
    <property type="match status" value="1"/>
</dbReference>
<dbReference type="SUPFAM" id="SSF52518">
    <property type="entry name" value="Thiamin diphosphate-binding fold (THDP-binding)"/>
    <property type="match status" value="2"/>
</dbReference>
<dbReference type="SUPFAM" id="SSF52922">
    <property type="entry name" value="TK C-terminal domain-like"/>
    <property type="match status" value="1"/>
</dbReference>
<dbReference type="PROSITE" id="PS00801">
    <property type="entry name" value="TRANSKETOLASE_1"/>
    <property type="match status" value="1"/>
</dbReference>
<dbReference type="PROSITE" id="PS00802">
    <property type="entry name" value="TRANSKETOLASE_2"/>
    <property type="match status" value="1"/>
</dbReference>
<accession>Q0BAL8</accession>
<feature type="chain" id="PRO_1000079085" description="1-deoxy-D-xylulose-5-phosphate synthase">
    <location>
        <begin position="1"/>
        <end position="646"/>
    </location>
</feature>
<feature type="binding site" evidence="1">
    <location>
        <position position="86"/>
    </location>
    <ligand>
        <name>thiamine diphosphate</name>
        <dbReference type="ChEBI" id="CHEBI:58937"/>
    </ligand>
</feature>
<feature type="binding site" evidence="1">
    <location>
        <begin position="127"/>
        <end position="129"/>
    </location>
    <ligand>
        <name>thiamine diphosphate</name>
        <dbReference type="ChEBI" id="CHEBI:58937"/>
    </ligand>
</feature>
<feature type="binding site" evidence="1">
    <location>
        <position position="158"/>
    </location>
    <ligand>
        <name>Mg(2+)</name>
        <dbReference type="ChEBI" id="CHEBI:18420"/>
    </ligand>
</feature>
<feature type="binding site" evidence="1">
    <location>
        <begin position="159"/>
        <end position="160"/>
    </location>
    <ligand>
        <name>thiamine diphosphate</name>
        <dbReference type="ChEBI" id="CHEBI:58937"/>
    </ligand>
</feature>
<feature type="binding site" evidence="1">
    <location>
        <position position="188"/>
    </location>
    <ligand>
        <name>Mg(2+)</name>
        <dbReference type="ChEBI" id="CHEBI:18420"/>
    </ligand>
</feature>
<feature type="binding site" evidence="1">
    <location>
        <position position="188"/>
    </location>
    <ligand>
        <name>thiamine diphosphate</name>
        <dbReference type="ChEBI" id="CHEBI:58937"/>
    </ligand>
</feature>
<feature type="binding site" evidence="1">
    <location>
        <position position="295"/>
    </location>
    <ligand>
        <name>thiamine diphosphate</name>
        <dbReference type="ChEBI" id="CHEBI:58937"/>
    </ligand>
</feature>
<feature type="binding site" evidence="1">
    <location>
        <position position="377"/>
    </location>
    <ligand>
        <name>thiamine diphosphate</name>
        <dbReference type="ChEBI" id="CHEBI:58937"/>
    </ligand>
</feature>
<name>DXS_BURCM</name>